<organism>
    <name type="scientific">Paraburkholderia phytofirmans (strain DSM 17436 / LMG 22146 / PsJN)</name>
    <name type="common">Burkholderia phytofirmans</name>
    <dbReference type="NCBI Taxonomy" id="398527"/>
    <lineage>
        <taxon>Bacteria</taxon>
        <taxon>Pseudomonadati</taxon>
        <taxon>Pseudomonadota</taxon>
        <taxon>Betaproteobacteria</taxon>
        <taxon>Burkholderiales</taxon>
        <taxon>Burkholderiaceae</taxon>
        <taxon>Paraburkholderia</taxon>
    </lineage>
</organism>
<keyword id="KW-0687">Ribonucleoprotein</keyword>
<keyword id="KW-0689">Ribosomal protein</keyword>
<accession>B2T752</accession>
<evidence type="ECO:0000255" key="1">
    <source>
        <dbReference type="HAMAP-Rule" id="MF_00508"/>
    </source>
</evidence>
<evidence type="ECO:0000305" key="2"/>
<proteinExistence type="inferred from homology"/>
<comment type="function">
    <text evidence="1">Involved in the binding of tRNA to the ribosomes.</text>
</comment>
<comment type="subunit">
    <text evidence="1">Part of the 30S ribosomal subunit.</text>
</comment>
<comment type="similarity">
    <text evidence="1">Belongs to the universal ribosomal protein uS10 family.</text>
</comment>
<dbReference type="EMBL" id="CP001052">
    <property type="protein sequence ID" value="ACD18035.1"/>
    <property type="molecule type" value="Genomic_DNA"/>
</dbReference>
<dbReference type="RefSeq" id="WP_006998489.1">
    <property type="nucleotide sequence ID" value="NC_010681.1"/>
</dbReference>
<dbReference type="SMR" id="B2T752"/>
<dbReference type="STRING" id="398527.Bphyt_3645"/>
<dbReference type="GeneID" id="97310991"/>
<dbReference type="KEGG" id="bpy:Bphyt_3645"/>
<dbReference type="eggNOG" id="COG0051">
    <property type="taxonomic scope" value="Bacteria"/>
</dbReference>
<dbReference type="HOGENOM" id="CLU_122625_1_3_4"/>
<dbReference type="OrthoDB" id="9804464at2"/>
<dbReference type="Proteomes" id="UP000001739">
    <property type="component" value="Chromosome 1"/>
</dbReference>
<dbReference type="GO" id="GO:1990904">
    <property type="term" value="C:ribonucleoprotein complex"/>
    <property type="evidence" value="ECO:0007669"/>
    <property type="project" value="UniProtKB-KW"/>
</dbReference>
<dbReference type="GO" id="GO:0005840">
    <property type="term" value="C:ribosome"/>
    <property type="evidence" value="ECO:0007669"/>
    <property type="project" value="UniProtKB-KW"/>
</dbReference>
<dbReference type="GO" id="GO:0003735">
    <property type="term" value="F:structural constituent of ribosome"/>
    <property type="evidence" value="ECO:0007669"/>
    <property type="project" value="InterPro"/>
</dbReference>
<dbReference type="GO" id="GO:0000049">
    <property type="term" value="F:tRNA binding"/>
    <property type="evidence" value="ECO:0007669"/>
    <property type="project" value="UniProtKB-UniRule"/>
</dbReference>
<dbReference type="GO" id="GO:0006412">
    <property type="term" value="P:translation"/>
    <property type="evidence" value="ECO:0007669"/>
    <property type="project" value="UniProtKB-UniRule"/>
</dbReference>
<dbReference type="FunFam" id="3.30.70.600:FF:000001">
    <property type="entry name" value="30S ribosomal protein S10"/>
    <property type="match status" value="1"/>
</dbReference>
<dbReference type="Gene3D" id="3.30.70.600">
    <property type="entry name" value="Ribosomal protein S10 domain"/>
    <property type="match status" value="1"/>
</dbReference>
<dbReference type="HAMAP" id="MF_00508">
    <property type="entry name" value="Ribosomal_uS10"/>
    <property type="match status" value="1"/>
</dbReference>
<dbReference type="InterPro" id="IPR001848">
    <property type="entry name" value="Ribosomal_uS10"/>
</dbReference>
<dbReference type="InterPro" id="IPR018268">
    <property type="entry name" value="Ribosomal_uS10_CS"/>
</dbReference>
<dbReference type="InterPro" id="IPR027486">
    <property type="entry name" value="Ribosomal_uS10_dom"/>
</dbReference>
<dbReference type="InterPro" id="IPR036838">
    <property type="entry name" value="Ribosomal_uS10_dom_sf"/>
</dbReference>
<dbReference type="NCBIfam" id="NF001861">
    <property type="entry name" value="PRK00596.1"/>
    <property type="match status" value="1"/>
</dbReference>
<dbReference type="NCBIfam" id="TIGR01049">
    <property type="entry name" value="rpsJ_bact"/>
    <property type="match status" value="1"/>
</dbReference>
<dbReference type="PANTHER" id="PTHR11700">
    <property type="entry name" value="30S RIBOSOMAL PROTEIN S10 FAMILY MEMBER"/>
    <property type="match status" value="1"/>
</dbReference>
<dbReference type="Pfam" id="PF00338">
    <property type="entry name" value="Ribosomal_S10"/>
    <property type="match status" value="1"/>
</dbReference>
<dbReference type="PRINTS" id="PR00971">
    <property type="entry name" value="RIBOSOMALS10"/>
</dbReference>
<dbReference type="SMART" id="SM01403">
    <property type="entry name" value="Ribosomal_S10"/>
    <property type="match status" value="1"/>
</dbReference>
<dbReference type="SUPFAM" id="SSF54999">
    <property type="entry name" value="Ribosomal protein S10"/>
    <property type="match status" value="1"/>
</dbReference>
<dbReference type="PROSITE" id="PS00361">
    <property type="entry name" value="RIBOSOMAL_S10"/>
    <property type="match status" value="1"/>
</dbReference>
<reference key="1">
    <citation type="journal article" date="2011" name="J. Bacteriol.">
        <title>Complete genome sequence of the plant growth-promoting endophyte Burkholderia phytofirmans strain PsJN.</title>
        <authorList>
            <person name="Weilharter A."/>
            <person name="Mitter B."/>
            <person name="Shin M.V."/>
            <person name="Chain P.S."/>
            <person name="Nowak J."/>
            <person name="Sessitsch A."/>
        </authorList>
    </citation>
    <scope>NUCLEOTIDE SEQUENCE [LARGE SCALE GENOMIC DNA]</scope>
    <source>
        <strain>DSM 17436 / LMG 22146 / PsJN</strain>
    </source>
</reference>
<sequence>MQNQKIRIRLKAFDYRLIDQSAAEIVDTAKRTGAIVRGPVPLPTRIQRFDILRSPHVNKTSRDQLEIRTHQRLMDIVDPTDKTVDALMKLDLPAGVDVEIKLQ</sequence>
<feature type="chain" id="PRO_1000127094" description="Small ribosomal subunit protein uS10">
    <location>
        <begin position="1"/>
        <end position="103"/>
    </location>
</feature>
<protein>
    <recommendedName>
        <fullName evidence="1">Small ribosomal subunit protein uS10</fullName>
    </recommendedName>
    <alternativeName>
        <fullName evidence="2">30S ribosomal protein S10</fullName>
    </alternativeName>
</protein>
<name>RS10_PARPJ</name>
<gene>
    <name evidence="1" type="primary">rpsJ</name>
    <name type="ordered locus">Bphyt_3645</name>
</gene>